<feature type="chain" id="PRO_1000123408" description="Pantothenate synthetase">
    <location>
        <begin position="1"/>
        <end position="281"/>
    </location>
</feature>
<feature type="active site" description="Proton donor" evidence="1">
    <location>
        <position position="37"/>
    </location>
</feature>
<feature type="binding site" evidence="1">
    <location>
        <begin position="30"/>
        <end position="37"/>
    </location>
    <ligand>
        <name>ATP</name>
        <dbReference type="ChEBI" id="CHEBI:30616"/>
    </ligand>
</feature>
<feature type="binding site" evidence="1">
    <location>
        <position position="60"/>
    </location>
    <ligand>
        <name>(R)-pantoate</name>
        <dbReference type="ChEBI" id="CHEBI:15980"/>
    </ligand>
</feature>
<feature type="binding site" evidence="1">
    <location>
        <position position="60"/>
    </location>
    <ligand>
        <name>beta-alanine</name>
        <dbReference type="ChEBI" id="CHEBI:57966"/>
    </ligand>
</feature>
<feature type="binding site" evidence="1">
    <location>
        <begin position="146"/>
        <end position="149"/>
    </location>
    <ligand>
        <name>ATP</name>
        <dbReference type="ChEBI" id="CHEBI:30616"/>
    </ligand>
</feature>
<feature type="binding site" evidence="1">
    <location>
        <position position="152"/>
    </location>
    <ligand>
        <name>(R)-pantoate</name>
        <dbReference type="ChEBI" id="CHEBI:15980"/>
    </ligand>
</feature>
<feature type="binding site" evidence="1">
    <location>
        <position position="175"/>
    </location>
    <ligand>
        <name>ATP</name>
        <dbReference type="ChEBI" id="CHEBI:30616"/>
    </ligand>
</feature>
<feature type="binding site" evidence="1">
    <location>
        <begin position="183"/>
        <end position="186"/>
    </location>
    <ligand>
        <name>ATP</name>
        <dbReference type="ChEBI" id="CHEBI:30616"/>
    </ligand>
</feature>
<keyword id="KW-0067">ATP-binding</keyword>
<keyword id="KW-0963">Cytoplasm</keyword>
<keyword id="KW-0436">Ligase</keyword>
<keyword id="KW-0547">Nucleotide-binding</keyword>
<keyword id="KW-0566">Pantothenate biosynthesis</keyword>
<keyword id="KW-1185">Reference proteome</keyword>
<reference key="1">
    <citation type="submission" date="2009-01" db="EMBL/GenBank/DDBJ databases">
        <title>Complete sequence of Clostridium cellulolyticum H10.</title>
        <authorList>
            <consortium name="US DOE Joint Genome Institute"/>
            <person name="Lucas S."/>
            <person name="Copeland A."/>
            <person name="Lapidus A."/>
            <person name="Glavina del Rio T."/>
            <person name="Dalin E."/>
            <person name="Tice H."/>
            <person name="Bruce D."/>
            <person name="Goodwin L."/>
            <person name="Pitluck S."/>
            <person name="Chertkov O."/>
            <person name="Saunders E."/>
            <person name="Brettin T."/>
            <person name="Detter J.C."/>
            <person name="Han C."/>
            <person name="Larimer F."/>
            <person name="Land M."/>
            <person name="Hauser L."/>
            <person name="Kyrpides N."/>
            <person name="Ivanova N."/>
            <person name="Zhou J."/>
            <person name="Richardson P."/>
        </authorList>
    </citation>
    <scope>NUCLEOTIDE SEQUENCE [LARGE SCALE GENOMIC DNA]</scope>
    <source>
        <strain>ATCC 35319 / DSM 5812 / JCM 6584 / H10</strain>
    </source>
</reference>
<dbReference type="EC" id="6.3.2.1" evidence="1"/>
<dbReference type="EMBL" id="CP001348">
    <property type="protein sequence ID" value="ACL76136.1"/>
    <property type="molecule type" value="Genomic_DNA"/>
</dbReference>
<dbReference type="RefSeq" id="WP_015925251.1">
    <property type="nucleotide sequence ID" value="NC_011898.1"/>
</dbReference>
<dbReference type="SMR" id="B8I2Z3"/>
<dbReference type="STRING" id="394503.Ccel_1786"/>
<dbReference type="KEGG" id="cce:Ccel_1786"/>
<dbReference type="eggNOG" id="COG0414">
    <property type="taxonomic scope" value="Bacteria"/>
</dbReference>
<dbReference type="HOGENOM" id="CLU_047148_0_0_9"/>
<dbReference type="OrthoDB" id="9773087at2"/>
<dbReference type="UniPathway" id="UPA00028">
    <property type="reaction ID" value="UER00005"/>
</dbReference>
<dbReference type="Proteomes" id="UP000001349">
    <property type="component" value="Chromosome"/>
</dbReference>
<dbReference type="GO" id="GO:0005829">
    <property type="term" value="C:cytosol"/>
    <property type="evidence" value="ECO:0007669"/>
    <property type="project" value="TreeGrafter"/>
</dbReference>
<dbReference type="GO" id="GO:0005524">
    <property type="term" value="F:ATP binding"/>
    <property type="evidence" value="ECO:0007669"/>
    <property type="project" value="UniProtKB-KW"/>
</dbReference>
<dbReference type="GO" id="GO:0004592">
    <property type="term" value="F:pantoate-beta-alanine ligase activity"/>
    <property type="evidence" value="ECO:0007669"/>
    <property type="project" value="UniProtKB-UniRule"/>
</dbReference>
<dbReference type="GO" id="GO:0015940">
    <property type="term" value="P:pantothenate biosynthetic process"/>
    <property type="evidence" value="ECO:0007669"/>
    <property type="project" value="UniProtKB-UniRule"/>
</dbReference>
<dbReference type="CDD" id="cd00560">
    <property type="entry name" value="PanC"/>
    <property type="match status" value="1"/>
</dbReference>
<dbReference type="FunFam" id="3.30.1300.10:FF:000001">
    <property type="entry name" value="Pantothenate synthetase"/>
    <property type="match status" value="1"/>
</dbReference>
<dbReference type="FunFam" id="3.40.50.620:FF:000114">
    <property type="entry name" value="Pantothenate synthetase"/>
    <property type="match status" value="1"/>
</dbReference>
<dbReference type="Gene3D" id="3.40.50.620">
    <property type="entry name" value="HUPs"/>
    <property type="match status" value="1"/>
</dbReference>
<dbReference type="Gene3D" id="3.30.1300.10">
    <property type="entry name" value="Pantoate-beta-alanine ligase, C-terminal domain"/>
    <property type="match status" value="1"/>
</dbReference>
<dbReference type="HAMAP" id="MF_00158">
    <property type="entry name" value="PanC"/>
    <property type="match status" value="1"/>
</dbReference>
<dbReference type="InterPro" id="IPR003721">
    <property type="entry name" value="Pantoate_ligase"/>
</dbReference>
<dbReference type="InterPro" id="IPR042176">
    <property type="entry name" value="Pantoate_ligase_C"/>
</dbReference>
<dbReference type="InterPro" id="IPR014729">
    <property type="entry name" value="Rossmann-like_a/b/a_fold"/>
</dbReference>
<dbReference type="NCBIfam" id="TIGR00018">
    <property type="entry name" value="panC"/>
    <property type="match status" value="1"/>
</dbReference>
<dbReference type="PANTHER" id="PTHR21299">
    <property type="entry name" value="CYTIDYLATE KINASE/PANTOATE-BETA-ALANINE LIGASE"/>
    <property type="match status" value="1"/>
</dbReference>
<dbReference type="PANTHER" id="PTHR21299:SF1">
    <property type="entry name" value="PANTOATE--BETA-ALANINE LIGASE"/>
    <property type="match status" value="1"/>
</dbReference>
<dbReference type="Pfam" id="PF02569">
    <property type="entry name" value="Pantoate_ligase"/>
    <property type="match status" value="1"/>
</dbReference>
<dbReference type="SUPFAM" id="SSF52374">
    <property type="entry name" value="Nucleotidylyl transferase"/>
    <property type="match status" value="1"/>
</dbReference>
<proteinExistence type="inferred from homology"/>
<protein>
    <recommendedName>
        <fullName evidence="1">Pantothenate synthetase</fullName>
        <shortName evidence="1">PS</shortName>
        <ecNumber evidence="1">6.3.2.1</ecNumber>
    </recommendedName>
    <alternativeName>
        <fullName evidence="1">Pantoate--beta-alanine ligase</fullName>
    </alternativeName>
    <alternativeName>
        <fullName evidence="1">Pantoate-activating enzyme</fullName>
    </alternativeName>
</protein>
<name>PANC_RUMCH</name>
<accession>B8I2Z3</accession>
<comment type="function">
    <text evidence="1">Catalyzes the condensation of pantoate with beta-alanine in an ATP-dependent reaction via a pantoyl-adenylate intermediate.</text>
</comment>
<comment type="catalytic activity">
    <reaction evidence="1">
        <text>(R)-pantoate + beta-alanine + ATP = (R)-pantothenate + AMP + diphosphate + H(+)</text>
        <dbReference type="Rhea" id="RHEA:10912"/>
        <dbReference type="ChEBI" id="CHEBI:15378"/>
        <dbReference type="ChEBI" id="CHEBI:15980"/>
        <dbReference type="ChEBI" id="CHEBI:29032"/>
        <dbReference type="ChEBI" id="CHEBI:30616"/>
        <dbReference type="ChEBI" id="CHEBI:33019"/>
        <dbReference type="ChEBI" id="CHEBI:57966"/>
        <dbReference type="ChEBI" id="CHEBI:456215"/>
        <dbReference type="EC" id="6.3.2.1"/>
    </reaction>
</comment>
<comment type="pathway">
    <text evidence="1">Cofactor biosynthesis; (R)-pantothenate biosynthesis; (R)-pantothenate from (R)-pantoate and beta-alanine: step 1/1.</text>
</comment>
<comment type="subunit">
    <text evidence="1">Homodimer.</text>
</comment>
<comment type="subcellular location">
    <subcellularLocation>
        <location evidence="1">Cytoplasm</location>
    </subcellularLocation>
</comment>
<comment type="miscellaneous">
    <text evidence="1">The reaction proceeds by a bi uni uni bi ping pong mechanism.</text>
</comment>
<comment type="similarity">
    <text evidence="1">Belongs to the pantothenate synthetase family.</text>
</comment>
<sequence length="281" mass="31690">MKSVNTIHEVKNIVKDWKKQGLSVGLVPTMGYLHEGHGSLILKARENSKVVVSIFVNPMQFGPTEDLEKYPRDLEKDLKYCEELGADLIFSPEPGEMYPEGFCTSVDMSVLTEELCGLSRPSHFKGVCTIVNKLLNIVNPDRAYFGEKDAQQLVIVKRMVRDLNMDIEIVGCPIIREKDGLAKSSRNTYLNSEERRAALVLSKSIFTGKDMVKKGCRETDVLLKKMKAIIDQEPLARIDYLKAVDTMTMQQVDTIDRPVLIAMAVYIGNVRLIDNFSFIPD</sequence>
<gene>
    <name evidence="1" type="primary">panC</name>
    <name type="ordered locus">Ccel_1786</name>
</gene>
<organism>
    <name type="scientific">Ruminiclostridium cellulolyticum (strain ATCC 35319 / DSM 5812 / JCM 6584 / H10)</name>
    <name type="common">Clostridium cellulolyticum</name>
    <dbReference type="NCBI Taxonomy" id="394503"/>
    <lineage>
        <taxon>Bacteria</taxon>
        <taxon>Bacillati</taxon>
        <taxon>Bacillota</taxon>
        <taxon>Clostridia</taxon>
        <taxon>Eubacteriales</taxon>
        <taxon>Oscillospiraceae</taxon>
        <taxon>Ruminiclostridium</taxon>
    </lineage>
</organism>
<evidence type="ECO:0000255" key="1">
    <source>
        <dbReference type="HAMAP-Rule" id="MF_00158"/>
    </source>
</evidence>